<organism>
    <name type="scientific">Paraburkholderia phymatum (strain DSM 17167 / CIP 108236 / LMG 21445 / STM815)</name>
    <name type="common">Burkholderia phymatum</name>
    <dbReference type="NCBI Taxonomy" id="391038"/>
    <lineage>
        <taxon>Bacteria</taxon>
        <taxon>Pseudomonadati</taxon>
        <taxon>Pseudomonadota</taxon>
        <taxon>Betaproteobacteria</taxon>
        <taxon>Burkholderiales</taxon>
        <taxon>Burkholderiaceae</taxon>
        <taxon>Paraburkholderia</taxon>
    </lineage>
</organism>
<dbReference type="EC" id="1.14.14.5" evidence="1"/>
<dbReference type="EMBL" id="CP001043">
    <property type="protein sequence ID" value="ACC70831.1"/>
    <property type="molecule type" value="Genomic_DNA"/>
</dbReference>
<dbReference type="RefSeq" id="WP_012401041.1">
    <property type="nucleotide sequence ID" value="NC_010622.1"/>
</dbReference>
<dbReference type="SMR" id="B2JKA8"/>
<dbReference type="STRING" id="391038.Bphy_1649"/>
<dbReference type="KEGG" id="bph:Bphy_1649"/>
<dbReference type="eggNOG" id="COG2141">
    <property type="taxonomic scope" value="Bacteria"/>
</dbReference>
<dbReference type="HOGENOM" id="CLU_027853_1_0_4"/>
<dbReference type="OrthoDB" id="9814695at2"/>
<dbReference type="Proteomes" id="UP000001192">
    <property type="component" value="Chromosome 1"/>
</dbReference>
<dbReference type="GO" id="GO:0008726">
    <property type="term" value="F:alkanesulfonate monooxygenase activity"/>
    <property type="evidence" value="ECO:0007669"/>
    <property type="project" value="UniProtKB-UniRule"/>
</dbReference>
<dbReference type="GO" id="GO:0046306">
    <property type="term" value="P:alkanesulfonate catabolic process"/>
    <property type="evidence" value="ECO:0007669"/>
    <property type="project" value="TreeGrafter"/>
</dbReference>
<dbReference type="CDD" id="cd01094">
    <property type="entry name" value="Alkanesulfonate_monoxygenase"/>
    <property type="match status" value="1"/>
</dbReference>
<dbReference type="Gene3D" id="3.20.20.30">
    <property type="entry name" value="Luciferase-like domain"/>
    <property type="match status" value="1"/>
</dbReference>
<dbReference type="HAMAP" id="MF_01229">
    <property type="entry name" value="Alkanesulf_monooxygen"/>
    <property type="match status" value="1"/>
</dbReference>
<dbReference type="InterPro" id="IPR019911">
    <property type="entry name" value="Alkanesulphonate_mOase_FMN-dep"/>
</dbReference>
<dbReference type="InterPro" id="IPR011251">
    <property type="entry name" value="Luciferase-like_dom"/>
</dbReference>
<dbReference type="InterPro" id="IPR036661">
    <property type="entry name" value="Luciferase-like_sf"/>
</dbReference>
<dbReference type="InterPro" id="IPR050172">
    <property type="entry name" value="SsuD_RutA_monooxygenase"/>
</dbReference>
<dbReference type="NCBIfam" id="TIGR03565">
    <property type="entry name" value="alk_sulf_monoox"/>
    <property type="match status" value="1"/>
</dbReference>
<dbReference type="NCBIfam" id="NF001939">
    <property type="entry name" value="PRK00719.1"/>
    <property type="match status" value="1"/>
</dbReference>
<dbReference type="PANTHER" id="PTHR42847">
    <property type="entry name" value="ALKANESULFONATE MONOOXYGENASE"/>
    <property type="match status" value="1"/>
</dbReference>
<dbReference type="PANTHER" id="PTHR42847:SF4">
    <property type="entry name" value="ALKANESULFONATE MONOOXYGENASE-RELATED"/>
    <property type="match status" value="1"/>
</dbReference>
<dbReference type="Pfam" id="PF00296">
    <property type="entry name" value="Bac_luciferase"/>
    <property type="match status" value="1"/>
</dbReference>
<dbReference type="SUPFAM" id="SSF51679">
    <property type="entry name" value="Bacterial luciferase-like"/>
    <property type="match status" value="1"/>
</dbReference>
<protein>
    <recommendedName>
        <fullName evidence="1">Alkanesulfonate monooxygenase</fullName>
        <ecNumber evidence="1">1.14.14.5</ecNumber>
    </recommendedName>
    <alternativeName>
        <fullName evidence="1">FMNH2-dependent aliphatic sulfonate monooxygenase</fullName>
    </alternativeName>
</protein>
<evidence type="ECO:0000255" key="1">
    <source>
        <dbReference type="HAMAP-Rule" id="MF_01229"/>
    </source>
</evidence>
<reference key="1">
    <citation type="journal article" date="2014" name="Stand. Genomic Sci.">
        <title>Complete genome sequence of Burkholderia phymatum STM815(T), a broad host range and efficient nitrogen-fixing symbiont of Mimosa species.</title>
        <authorList>
            <person name="Moulin L."/>
            <person name="Klonowska A."/>
            <person name="Caroline B."/>
            <person name="Booth K."/>
            <person name="Vriezen J.A."/>
            <person name="Melkonian R."/>
            <person name="James E.K."/>
            <person name="Young J.P."/>
            <person name="Bena G."/>
            <person name="Hauser L."/>
            <person name="Land M."/>
            <person name="Kyrpides N."/>
            <person name="Bruce D."/>
            <person name="Chain P."/>
            <person name="Copeland A."/>
            <person name="Pitluck S."/>
            <person name="Woyke T."/>
            <person name="Lizotte-Waniewski M."/>
            <person name="Bristow J."/>
            <person name="Riley M."/>
        </authorList>
    </citation>
    <scope>NUCLEOTIDE SEQUENCE [LARGE SCALE GENOMIC DNA]</scope>
    <source>
        <strain>DSM 17167 / CIP 108236 / LMG 21445 / STM815</strain>
    </source>
</reference>
<feature type="chain" id="PRO_1000139612" description="Alkanesulfonate monooxygenase">
    <location>
        <begin position="1"/>
        <end position="385"/>
    </location>
</feature>
<name>SSUD_PARP8</name>
<gene>
    <name evidence="1" type="primary">ssuD</name>
    <name type="ordered locus">Bphy_1649</name>
</gene>
<keyword id="KW-0285">Flavoprotein</keyword>
<keyword id="KW-0288">FMN</keyword>
<keyword id="KW-0503">Monooxygenase</keyword>
<keyword id="KW-0560">Oxidoreductase</keyword>
<keyword id="KW-1185">Reference proteome</keyword>
<comment type="function">
    <text evidence="1">Catalyzes the desulfonation of aliphatic sulfonates.</text>
</comment>
<comment type="catalytic activity">
    <reaction evidence="1">
        <text>an alkanesulfonate + FMNH2 + O2 = an aldehyde + FMN + sulfite + H2O + 2 H(+)</text>
        <dbReference type="Rhea" id="RHEA:23064"/>
        <dbReference type="ChEBI" id="CHEBI:15377"/>
        <dbReference type="ChEBI" id="CHEBI:15378"/>
        <dbReference type="ChEBI" id="CHEBI:15379"/>
        <dbReference type="ChEBI" id="CHEBI:17359"/>
        <dbReference type="ChEBI" id="CHEBI:17478"/>
        <dbReference type="ChEBI" id="CHEBI:57618"/>
        <dbReference type="ChEBI" id="CHEBI:58210"/>
        <dbReference type="ChEBI" id="CHEBI:134249"/>
        <dbReference type="EC" id="1.14.14.5"/>
    </reaction>
</comment>
<comment type="similarity">
    <text evidence="1">Belongs to the SsuD family.</text>
</comment>
<sequence>MNVFWFIPTHGDSRYLGTSQGARAADYDYFRQIAVAADTLGYEGVLLPTGRSCEDAWVVASSLIPATQRLKFLVAIRPGIASPGLSARMAATFDRLSGGRLLINVVTGGDAAELEGDGLFVDHDTRYEITDEFLRIWRGLLTSAHHGESVEFIGRHLKSKGGKLLYPPVQSPHPPLWFGGSSPAAHEMAGEHIDTYLTWGEPPEAVAEKIADIRARAAQHGRTIRFGIRLHVIVRETEDEAWAAADKLISKLDDDTVARAQEAFAKMDSEGQRRMAALHGGKRGSRKELEIYPNLWAGVGLVRGGAGTALVGNAEQVAARMREYAELGIETFILSGYPHLEESYRFAELVFPLLPGRQRANANGPLSGPFGEIVGNHYAPKASQS</sequence>
<proteinExistence type="inferred from homology"/>
<accession>B2JKA8</accession>